<reference key="1">
    <citation type="submission" date="2007-06" db="EMBL/GenBank/DDBJ databases">
        <title>Complete sequence of Methanococcus aeolicus Nankai-3.</title>
        <authorList>
            <consortium name="US DOE Joint Genome Institute"/>
            <person name="Copeland A."/>
            <person name="Lucas S."/>
            <person name="Lapidus A."/>
            <person name="Barry K."/>
            <person name="Glavina del Rio T."/>
            <person name="Dalin E."/>
            <person name="Tice H."/>
            <person name="Pitluck S."/>
            <person name="Chain P."/>
            <person name="Malfatti S."/>
            <person name="Shin M."/>
            <person name="Vergez L."/>
            <person name="Schmutz J."/>
            <person name="Larimer F."/>
            <person name="Land M."/>
            <person name="Hauser L."/>
            <person name="Kyrpides N."/>
            <person name="Lykidis A."/>
            <person name="Sieprawska-Lupa M."/>
            <person name="Whitman W.B."/>
            <person name="Richardson P."/>
        </authorList>
    </citation>
    <scope>NUCLEOTIDE SEQUENCE [LARGE SCALE GENOMIC DNA]</scope>
    <source>
        <strain>ATCC BAA-1280 / DSM 17508 / OCM 812 / Nankai-3</strain>
    </source>
</reference>
<feature type="chain" id="PRO_0000312471" description="5'-deoxyadenosine deaminase">
    <location>
        <begin position="1"/>
        <end position="428"/>
    </location>
</feature>
<feature type="binding site" evidence="1">
    <location>
        <position position="59"/>
    </location>
    <ligand>
        <name>Zn(2+)</name>
        <dbReference type="ChEBI" id="CHEBI:29105"/>
    </ligand>
</feature>
<feature type="binding site" evidence="1">
    <location>
        <position position="61"/>
    </location>
    <ligand>
        <name>Zn(2+)</name>
        <dbReference type="ChEBI" id="CHEBI:29105"/>
    </ligand>
</feature>
<feature type="binding site" evidence="1">
    <location>
        <position position="88"/>
    </location>
    <ligand>
        <name>substrate</name>
    </ligand>
</feature>
<feature type="binding site" evidence="1">
    <location>
        <position position="180"/>
    </location>
    <ligand>
        <name>substrate</name>
    </ligand>
</feature>
<feature type="binding site" evidence="1">
    <location>
        <position position="207"/>
    </location>
    <ligand>
        <name>Zn(2+)</name>
        <dbReference type="ChEBI" id="CHEBI:29105"/>
    </ligand>
</feature>
<feature type="binding site" evidence="1">
    <location>
        <position position="210"/>
    </location>
    <ligand>
        <name>substrate</name>
    </ligand>
</feature>
<feature type="binding site" evidence="1">
    <location>
        <position position="296"/>
    </location>
    <ligand>
        <name>substrate</name>
    </ligand>
</feature>
<feature type="binding site" evidence="1">
    <location>
        <position position="296"/>
    </location>
    <ligand>
        <name>Zn(2+)</name>
        <dbReference type="ChEBI" id="CHEBI:29105"/>
    </ligand>
</feature>
<dbReference type="EC" id="3.5.4.41" evidence="1"/>
<dbReference type="EC" id="3.5.4.31" evidence="1"/>
<dbReference type="EC" id="3.5.4.4" evidence="1"/>
<dbReference type="EC" id="3.5.4.28" evidence="1"/>
<dbReference type="EMBL" id="CP000743">
    <property type="protein sequence ID" value="ABR56141.1"/>
    <property type="molecule type" value="Genomic_DNA"/>
</dbReference>
<dbReference type="RefSeq" id="WP_011973273.1">
    <property type="nucleotide sequence ID" value="NC_009635.1"/>
</dbReference>
<dbReference type="SMR" id="A6UUG9"/>
<dbReference type="STRING" id="419665.Maeo_0556"/>
<dbReference type="GeneID" id="5327216"/>
<dbReference type="KEGG" id="mae:Maeo_0556"/>
<dbReference type="eggNOG" id="arCOG00695">
    <property type="taxonomic scope" value="Archaea"/>
</dbReference>
<dbReference type="HOGENOM" id="CLU_012358_2_1_2"/>
<dbReference type="OrthoDB" id="372084at2157"/>
<dbReference type="UniPathway" id="UPA00315"/>
<dbReference type="Proteomes" id="UP000001106">
    <property type="component" value="Chromosome"/>
</dbReference>
<dbReference type="GO" id="GO:0090613">
    <property type="term" value="F:5'-deoxyadenosine deaminase activity"/>
    <property type="evidence" value="ECO:0007669"/>
    <property type="project" value="UniProtKB-UniRule"/>
</dbReference>
<dbReference type="GO" id="GO:0090614">
    <property type="term" value="F:5'-methylthioadenosine deaminase activity"/>
    <property type="evidence" value="ECO:0007669"/>
    <property type="project" value="UniProtKB-EC"/>
</dbReference>
<dbReference type="GO" id="GO:0004000">
    <property type="term" value="F:adenosine deaminase activity"/>
    <property type="evidence" value="ECO:0007669"/>
    <property type="project" value="UniProtKB-UniRule"/>
</dbReference>
<dbReference type="GO" id="GO:0046872">
    <property type="term" value="F:metal ion binding"/>
    <property type="evidence" value="ECO:0007669"/>
    <property type="project" value="UniProtKB-KW"/>
</dbReference>
<dbReference type="GO" id="GO:0050270">
    <property type="term" value="F:S-adenosylhomocysteine deaminase activity"/>
    <property type="evidence" value="ECO:0007669"/>
    <property type="project" value="UniProtKB-EC"/>
</dbReference>
<dbReference type="GO" id="GO:0006556">
    <property type="term" value="P:S-adenosylmethionine biosynthetic process"/>
    <property type="evidence" value="ECO:0007669"/>
    <property type="project" value="UniProtKB-UniRule"/>
</dbReference>
<dbReference type="CDD" id="cd01298">
    <property type="entry name" value="ATZ_TRZ_like"/>
    <property type="match status" value="1"/>
</dbReference>
<dbReference type="FunFam" id="3.20.20.140:FF:000014">
    <property type="entry name" value="5-methylthioadenosine/S-adenosylhomocysteine deaminase"/>
    <property type="match status" value="1"/>
</dbReference>
<dbReference type="Gene3D" id="3.20.20.140">
    <property type="entry name" value="Metal-dependent hydrolases"/>
    <property type="match status" value="1"/>
</dbReference>
<dbReference type="Gene3D" id="2.30.40.10">
    <property type="entry name" value="Urease, subunit C, domain 1"/>
    <property type="match status" value="1"/>
</dbReference>
<dbReference type="HAMAP" id="MF_01281">
    <property type="entry name" value="MTA_SAH_deamin"/>
    <property type="match status" value="1"/>
</dbReference>
<dbReference type="InterPro" id="IPR006680">
    <property type="entry name" value="Amidohydro-rel"/>
</dbReference>
<dbReference type="InterPro" id="IPR023512">
    <property type="entry name" value="Deaminase_MtaD/DadD"/>
</dbReference>
<dbReference type="InterPro" id="IPR011059">
    <property type="entry name" value="Metal-dep_hydrolase_composite"/>
</dbReference>
<dbReference type="InterPro" id="IPR032466">
    <property type="entry name" value="Metal_Hydrolase"/>
</dbReference>
<dbReference type="InterPro" id="IPR050287">
    <property type="entry name" value="MTA/SAH_deaminase"/>
</dbReference>
<dbReference type="PANTHER" id="PTHR43794:SF11">
    <property type="entry name" value="AMIDOHYDROLASE-RELATED DOMAIN-CONTAINING PROTEIN"/>
    <property type="match status" value="1"/>
</dbReference>
<dbReference type="PANTHER" id="PTHR43794">
    <property type="entry name" value="AMINOHYDROLASE SSNA-RELATED"/>
    <property type="match status" value="1"/>
</dbReference>
<dbReference type="Pfam" id="PF01979">
    <property type="entry name" value="Amidohydro_1"/>
    <property type="match status" value="1"/>
</dbReference>
<dbReference type="SUPFAM" id="SSF51338">
    <property type="entry name" value="Composite domain of metallo-dependent hydrolases"/>
    <property type="match status" value="1"/>
</dbReference>
<dbReference type="SUPFAM" id="SSF51556">
    <property type="entry name" value="Metallo-dependent hydrolases"/>
    <property type="match status" value="1"/>
</dbReference>
<sequence>MILIQDATINNKVQDILIEKNKIKKIGKNLIQKENLNRKDLKIIDGKNKIIIPGLVNTHTHTPMTLFRGVADDLPLMDWLNNYIWKMEANLNEKIVYDATMLGCMEMIKSGTTTFNDMYFYMNGIIKGVQETGIRAYLGYGMIDLFDEEKRENELKETVNTVENIQKLNNPKINPTVSPHAPYTCSMELLQESHNLAKKYNVPLHIHLNETIDEIKTVEEMTNKRPFEYLDSFGFFNGVKVISAHNVHLSNKEIEIIKNKNIAISHNPISNLKLASGIAPIPKLMENTVLITLGTDGCGSNNNLNLFEEIKMASLIHKGNSLNPTVVSASQSFEFATKNGANALGLNAGELVEGALADVVIIDINKPYLIPNENIYSHLVYSFNGVVDMVIIDGEIVLNNGKMVNINEEKVYENAEKSYNKLLNNSDE</sequence>
<comment type="function">
    <text evidence="1">Catalyzes the deamination of three SAM-derived enzymatic products, namely 5'-deoxyadenosine, S-adenosyl-L-homocysteine, and 5'-methylthioadenosine, to produce the inosine analogs. Can also deaminate adenosine. The preferred substrate for this enzyme is 5'-deoxyadenosine, but all these substrates are efficiently deaminated. Likely functions in a S-adenosyl-L-methionine (SAM) recycling pathway from S-adenosyl-L-homocysteine (SAH) produced from SAM-dependent methylation reactions. May also be involved in the recycling of 5'-deoxyadenosine, whereupon the 5'-deoxyribose moiety of 5'-deoxyinosine is further metabolized to deoxyhexoses used for the biosynthesis of aromatic amino acids in methanogens.</text>
</comment>
<comment type="catalytic activity">
    <reaction evidence="1">
        <text>5'-deoxyadenosine + H2O + H(+) = 5'-deoxyinosine + NH4(+)</text>
        <dbReference type="Rhea" id="RHEA:42892"/>
        <dbReference type="ChEBI" id="CHEBI:15377"/>
        <dbReference type="ChEBI" id="CHEBI:15378"/>
        <dbReference type="ChEBI" id="CHEBI:17319"/>
        <dbReference type="ChEBI" id="CHEBI:28938"/>
        <dbReference type="ChEBI" id="CHEBI:82775"/>
        <dbReference type="EC" id="3.5.4.41"/>
    </reaction>
    <physiologicalReaction direction="left-to-right" evidence="1">
        <dbReference type="Rhea" id="RHEA:42893"/>
    </physiologicalReaction>
</comment>
<comment type="catalytic activity">
    <reaction evidence="1">
        <text>S-adenosyl-L-homocysteine + H2O + H(+) = S-inosyl-L-homocysteine + NH4(+)</text>
        <dbReference type="Rhea" id="RHEA:20716"/>
        <dbReference type="ChEBI" id="CHEBI:15377"/>
        <dbReference type="ChEBI" id="CHEBI:15378"/>
        <dbReference type="ChEBI" id="CHEBI:28938"/>
        <dbReference type="ChEBI" id="CHEBI:57856"/>
        <dbReference type="ChEBI" id="CHEBI:57985"/>
        <dbReference type="EC" id="3.5.4.28"/>
    </reaction>
    <physiologicalReaction direction="left-to-right" evidence="1">
        <dbReference type="Rhea" id="RHEA:20717"/>
    </physiologicalReaction>
</comment>
<comment type="catalytic activity">
    <reaction evidence="1">
        <text>S-methyl-5'-thioadenosine + H2O + H(+) = S-methyl-5'-thioinosine + NH4(+)</text>
        <dbReference type="Rhea" id="RHEA:25025"/>
        <dbReference type="ChEBI" id="CHEBI:15377"/>
        <dbReference type="ChEBI" id="CHEBI:15378"/>
        <dbReference type="ChEBI" id="CHEBI:17509"/>
        <dbReference type="ChEBI" id="CHEBI:28938"/>
        <dbReference type="ChEBI" id="CHEBI:48595"/>
        <dbReference type="EC" id="3.5.4.31"/>
    </reaction>
    <physiologicalReaction direction="left-to-right" evidence="1">
        <dbReference type="Rhea" id="RHEA:25026"/>
    </physiologicalReaction>
</comment>
<comment type="catalytic activity">
    <reaction evidence="1">
        <text>adenosine + H2O + H(+) = inosine + NH4(+)</text>
        <dbReference type="Rhea" id="RHEA:24408"/>
        <dbReference type="ChEBI" id="CHEBI:15377"/>
        <dbReference type="ChEBI" id="CHEBI:15378"/>
        <dbReference type="ChEBI" id="CHEBI:16335"/>
        <dbReference type="ChEBI" id="CHEBI:17596"/>
        <dbReference type="ChEBI" id="CHEBI:28938"/>
        <dbReference type="EC" id="3.5.4.4"/>
    </reaction>
    <physiologicalReaction direction="left-to-right" evidence="1">
        <dbReference type="Rhea" id="RHEA:24409"/>
    </physiologicalReaction>
</comment>
<comment type="cofactor">
    <cofactor evidence="1">
        <name>Zn(2+)</name>
        <dbReference type="ChEBI" id="CHEBI:29105"/>
    </cofactor>
    <text evidence="1">Binds 1 zinc ion per subunit.</text>
</comment>
<comment type="pathway">
    <text evidence="1">Amino-acid biosynthesis; S-adenosyl-L-methionine biosynthesis.</text>
</comment>
<comment type="subunit">
    <text evidence="1">Homotetramer.</text>
</comment>
<comment type="miscellaneous">
    <text evidence="1">SAH is a product of SAM methyltransferases and is known to be a feedback inhibitor of these enzymes. As a result of this inhibition, organisms have evolved efficient enzymes to metabolize SAH via different pathways. The pathway found in methanogens differs from the canonical pathway, it uses the deamination of S-adenosyl-L-homocysteine to form S-inosyl-L-homocysteine for the regeneration of SAM from S-adenosyl-L-homocysteine. 5'-deoxyadenosine is a radical SAM enzyme reaction product which strongly inhibits radical SAM enzymes. A pathway for removing this product must be present in methanogens where the MTA/SAH nucleosidase which normally metabolizes this compound is absent.</text>
</comment>
<comment type="similarity">
    <text evidence="1">Belongs to the metallo-dependent hydrolases superfamily. MTA/SAH deaminase family.</text>
</comment>
<organism>
    <name type="scientific">Methanococcus aeolicus (strain ATCC BAA-1280 / DSM 17508 / OCM 812 / Nankai-3)</name>
    <dbReference type="NCBI Taxonomy" id="419665"/>
    <lineage>
        <taxon>Archaea</taxon>
        <taxon>Methanobacteriati</taxon>
        <taxon>Methanobacteriota</taxon>
        <taxon>Methanomada group</taxon>
        <taxon>Methanococci</taxon>
        <taxon>Methanococcales</taxon>
        <taxon>Methanococcaceae</taxon>
        <taxon>Methanococcus</taxon>
    </lineage>
</organism>
<gene>
    <name evidence="1" type="primary">dadD</name>
    <name type="ordered locus">Maeo_0556</name>
</gene>
<protein>
    <recommendedName>
        <fullName evidence="1">5'-deoxyadenosine deaminase</fullName>
        <shortName evidence="1">5'-dA deaminase</shortName>
        <ecNumber evidence="1">3.5.4.41</ecNumber>
    </recommendedName>
    <alternativeName>
        <fullName evidence="1">5'-methylthioadenosine deaminase</fullName>
        <shortName evidence="1">MTA deaminase</shortName>
        <ecNumber evidence="1">3.5.4.31</ecNumber>
    </alternativeName>
    <alternativeName>
        <fullName evidence="1">Adenosine deaminase</fullName>
        <ecNumber evidence="1">3.5.4.4</ecNumber>
    </alternativeName>
    <alternativeName>
        <fullName evidence="1">S-adenosylhomocysteine deaminase</fullName>
        <shortName evidence="1">SAH deaminase</shortName>
        <ecNumber evidence="1">3.5.4.28</ecNumber>
    </alternativeName>
</protein>
<name>DADD_META3</name>
<accession>A6UUG9</accession>
<proteinExistence type="inferred from homology"/>
<evidence type="ECO:0000255" key="1">
    <source>
        <dbReference type="HAMAP-Rule" id="MF_01281"/>
    </source>
</evidence>
<keyword id="KW-0378">Hydrolase</keyword>
<keyword id="KW-0479">Metal-binding</keyword>
<keyword id="KW-0862">Zinc</keyword>